<reference key="1">
    <citation type="submission" date="2006-09" db="EMBL/GenBank/DDBJ databases">
        <authorList>
            <consortium name="NIH - Xenopus Gene Collection (XGC) project"/>
        </authorList>
    </citation>
    <scope>NUCLEOTIDE SEQUENCE [LARGE SCALE MRNA]</scope>
    <source>
        <tissue>Brain</tissue>
    </source>
</reference>
<proteinExistence type="evidence at transcript level"/>
<name>SHQ1_XENTR</name>
<dbReference type="EMBL" id="BC123006">
    <property type="protein sequence ID" value="AAI23007.1"/>
    <property type="molecule type" value="mRNA"/>
</dbReference>
<dbReference type="RefSeq" id="NP_001072616.1">
    <property type="nucleotide sequence ID" value="NM_001079148.1"/>
</dbReference>
<dbReference type="SMR" id="Q05B18"/>
<dbReference type="FunCoup" id="Q05B18">
    <property type="interactions" value="2969"/>
</dbReference>
<dbReference type="STRING" id="8364.ENSXETP00000033232"/>
<dbReference type="PaxDb" id="8364-ENSXETP00000001920"/>
<dbReference type="DNASU" id="780072"/>
<dbReference type="GeneID" id="780072"/>
<dbReference type="KEGG" id="xtr:780072"/>
<dbReference type="AGR" id="Xenbase:XB-GENE-5820245"/>
<dbReference type="CTD" id="55164"/>
<dbReference type="Xenbase" id="XB-GENE-5820245">
    <property type="gene designation" value="shq1"/>
</dbReference>
<dbReference type="eggNOG" id="KOG3247">
    <property type="taxonomic scope" value="Eukaryota"/>
</dbReference>
<dbReference type="InParanoid" id="Q05B18"/>
<dbReference type="OMA" id="HNIESAW"/>
<dbReference type="OrthoDB" id="73639at2759"/>
<dbReference type="Proteomes" id="UP000008143">
    <property type="component" value="Chromosome 4"/>
</dbReference>
<dbReference type="GO" id="GO:0005829">
    <property type="term" value="C:cytosol"/>
    <property type="evidence" value="ECO:0007669"/>
    <property type="project" value="UniProtKB-SubCell"/>
</dbReference>
<dbReference type="GO" id="GO:0005654">
    <property type="term" value="C:nucleoplasm"/>
    <property type="evidence" value="ECO:0007669"/>
    <property type="project" value="UniProtKB-SubCell"/>
</dbReference>
<dbReference type="GO" id="GO:0000493">
    <property type="term" value="P:box H/ACA snoRNP assembly"/>
    <property type="evidence" value="ECO:0007669"/>
    <property type="project" value="InterPro"/>
</dbReference>
<dbReference type="GO" id="GO:0022618">
    <property type="term" value="P:protein-RNA complex assembly"/>
    <property type="evidence" value="ECO:0000250"/>
    <property type="project" value="UniProtKB"/>
</dbReference>
<dbReference type="CDD" id="cd00298">
    <property type="entry name" value="ACD_sHsps_p23-like"/>
    <property type="match status" value="1"/>
</dbReference>
<dbReference type="FunFam" id="2.60.40.790:FF:000022">
    <property type="entry name" value="Protein SHQ1 homolog"/>
    <property type="match status" value="1"/>
</dbReference>
<dbReference type="Gene3D" id="2.60.40.790">
    <property type="match status" value="1"/>
</dbReference>
<dbReference type="InterPro" id="IPR007052">
    <property type="entry name" value="CS_dom"/>
</dbReference>
<dbReference type="InterPro" id="IPR008978">
    <property type="entry name" value="HSP20-like_chaperone"/>
</dbReference>
<dbReference type="InterPro" id="IPR039742">
    <property type="entry name" value="Shq1"/>
</dbReference>
<dbReference type="InterPro" id="IPR048696">
    <property type="entry name" value="SHQ1-like_CS"/>
</dbReference>
<dbReference type="InterPro" id="IPR007009">
    <property type="entry name" value="Shq1_C"/>
</dbReference>
<dbReference type="PANTHER" id="PTHR12967">
    <property type="entry name" value="PROTEIN SHQ1 HOMOLOG"/>
    <property type="match status" value="1"/>
</dbReference>
<dbReference type="PANTHER" id="PTHR12967:SF0">
    <property type="entry name" value="PROTEIN SHQ1 HOMOLOG"/>
    <property type="match status" value="1"/>
</dbReference>
<dbReference type="Pfam" id="PF04925">
    <property type="entry name" value="SHQ1"/>
    <property type="match status" value="1"/>
</dbReference>
<dbReference type="Pfam" id="PF21413">
    <property type="entry name" value="SHQ1-like_CS"/>
    <property type="match status" value="1"/>
</dbReference>
<dbReference type="SUPFAM" id="SSF49764">
    <property type="entry name" value="HSP20-like chaperones"/>
    <property type="match status" value="1"/>
</dbReference>
<dbReference type="PROSITE" id="PS51203">
    <property type="entry name" value="CS"/>
    <property type="match status" value="1"/>
</dbReference>
<keyword id="KW-0963">Cytoplasm</keyword>
<keyword id="KW-0539">Nucleus</keyword>
<keyword id="KW-1185">Reference proteome</keyword>
<gene>
    <name type="primary">shq1</name>
</gene>
<sequence>MITPAFDISQDSDFLTIIIKVPYARASEIDIYIEGDDFKFYAKPYFLRLALPGRIVEDGRQKATYNADDGIITVSVPKETPGQHFEGLDLLTSLLAPRGSKSAKPLVEEIGSSDNVVEEEEDEFDWQIEQTPFVEPTEEALQSQCTYGFGNLRSGVFRRLQEELNDVIDLRDPDVTPASERTRRRLAAEKAKFDPDHYLADLFEEEPVQHLLKYQPWWVAEIHAGCSLSAESQERRVSFSDKQKEQLRKFTNKSHLLDKKTQQQAYLGLIDLLLAYCYEVRVTEGDQNVESAWNIRKLSSTLSWFENFTCVKDILVSFGRRVLCYPLYRNFQLVEKAIADTVSLLKLGKAAVLKCLLEIHAIFQENDPAYILNDLYITDYCIWIQKVKSKKVASLSDCVQSLSISKSDLGFELGELEEAARLVQEEETQGQLASSTCLVRPLATVASESSDTDSSTSDTDDSSSETEDSTSEESTSEEEADPTDSELQKAIVPGQNSRVQSSLEKAGEEKNKLPAAGKAETTVTEQMKHLAEKMNSAVILSEAPVGPPGVQDKSPEKKAGECTAQSAQSTTGTPMTREFLEVTPRLNPLLIVPLSDEDDELAEH</sequence>
<accession>Q05B18</accession>
<protein>
    <recommendedName>
        <fullName>Protein SHQ1 homolog</fullName>
    </recommendedName>
</protein>
<feature type="chain" id="PRO_0000302825" description="Protein SHQ1 homolog">
    <location>
        <begin position="1"/>
        <end position="604"/>
    </location>
</feature>
<feature type="domain" description="CS" evidence="2">
    <location>
        <begin position="1"/>
        <end position="89"/>
    </location>
</feature>
<feature type="region of interest" description="Disordered" evidence="3">
    <location>
        <begin position="445"/>
        <end position="521"/>
    </location>
</feature>
<feature type="region of interest" description="Disordered" evidence="3">
    <location>
        <begin position="541"/>
        <end position="575"/>
    </location>
</feature>
<feature type="compositionally biased region" description="Low complexity" evidence="3">
    <location>
        <begin position="447"/>
        <end position="457"/>
    </location>
</feature>
<feature type="compositionally biased region" description="Acidic residues" evidence="3">
    <location>
        <begin position="458"/>
        <end position="484"/>
    </location>
</feature>
<feature type="compositionally biased region" description="Polar residues" evidence="3">
    <location>
        <begin position="494"/>
        <end position="503"/>
    </location>
</feature>
<feature type="compositionally biased region" description="Polar residues" evidence="3">
    <location>
        <begin position="563"/>
        <end position="574"/>
    </location>
</feature>
<comment type="function">
    <text evidence="1">Required for the quantitative accumulation of H/ACA ribonucleoproteins (RNPs).</text>
</comment>
<comment type="subcellular location">
    <subcellularLocation>
        <location evidence="1">Cytoplasm</location>
        <location evidence="1">Cytosol</location>
    </subcellularLocation>
    <subcellularLocation>
        <location evidence="1">Nucleus</location>
        <location evidence="1">Nucleoplasm</location>
    </subcellularLocation>
</comment>
<comment type="similarity">
    <text evidence="4">Belongs to the SHQ1 family.</text>
</comment>
<organism>
    <name type="scientific">Xenopus tropicalis</name>
    <name type="common">Western clawed frog</name>
    <name type="synonym">Silurana tropicalis</name>
    <dbReference type="NCBI Taxonomy" id="8364"/>
    <lineage>
        <taxon>Eukaryota</taxon>
        <taxon>Metazoa</taxon>
        <taxon>Chordata</taxon>
        <taxon>Craniata</taxon>
        <taxon>Vertebrata</taxon>
        <taxon>Euteleostomi</taxon>
        <taxon>Amphibia</taxon>
        <taxon>Batrachia</taxon>
        <taxon>Anura</taxon>
        <taxon>Pipoidea</taxon>
        <taxon>Pipidae</taxon>
        <taxon>Xenopodinae</taxon>
        <taxon>Xenopus</taxon>
        <taxon>Silurana</taxon>
    </lineage>
</organism>
<evidence type="ECO:0000250" key="1"/>
<evidence type="ECO:0000255" key="2">
    <source>
        <dbReference type="PROSITE-ProRule" id="PRU00547"/>
    </source>
</evidence>
<evidence type="ECO:0000256" key="3">
    <source>
        <dbReference type="SAM" id="MobiDB-lite"/>
    </source>
</evidence>
<evidence type="ECO:0000305" key="4"/>